<keyword id="KW-0028">Amino-acid biosynthesis</keyword>
<keyword id="KW-0963">Cytoplasm</keyword>
<keyword id="KW-0521">NADP</keyword>
<keyword id="KW-0560">Oxidoreductase</keyword>
<keyword id="KW-0641">Proline biosynthesis</keyword>
<keyword id="KW-1185">Reference proteome</keyword>
<proteinExistence type="inferred from homology"/>
<dbReference type="EC" id="1.2.1.41" evidence="1"/>
<dbReference type="EMBL" id="CU207211">
    <property type="protein sequence ID" value="CAL62786.1"/>
    <property type="molecule type" value="Genomic_DNA"/>
</dbReference>
<dbReference type="SMR" id="A4G8E9"/>
<dbReference type="STRING" id="204773.HEAR2664"/>
<dbReference type="KEGG" id="har:HEAR2664"/>
<dbReference type="eggNOG" id="COG0014">
    <property type="taxonomic scope" value="Bacteria"/>
</dbReference>
<dbReference type="HOGENOM" id="CLU_030231_0_0_4"/>
<dbReference type="OrthoDB" id="9809970at2"/>
<dbReference type="UniPathway" id="UPA00098">
    <property type="reaction ID" value="UER00360"/>
</dbReference>
<dbReference type="Proteomes" id="UP000006697">
    <property type="component" value="Chromosome"/>
</dbReference>
<dbReference type="GO" id="GO:0005737">
    <property type="term" value="C:cytoplasm"/>
    <property type="evidence" value="ECO:0007669"/>
    <property type="project" value="UniProtKB-SubCell"/>
</dbReference>
<dbReference type="GO" id="GO:0004350">
    <property type="term" value="F:glutamate-5-semialdehyde dehydrogenase activity"/>
    <property type="evidence" value="ECO:0007669"/>
    <property type="project" value="UniProtKB-UniRule"/>
</dbReference>
<dbReference type="GO" id="GO:0050661">
    <property type="term" value="F:NADP binding"/>
    <property type="evidence" value="ECO:0007669"/>
    <property type="project" value="InterPro"/>
</dbReference>
<dbReference type="GO" id="GO:0055129">
    <property type="term" value="P:L-proline biosynthetic process"/>
    <property type="evidence" value="ECO:0007669"/>
    <property type="project" value="UniProtKB-UniRule"/>
</dbReference>
<dbReference type="CDD" id="cd07079">
    <property type="entry name" value="ALDH_F18-19_ProA-GPR"/>
    <property type="match status" value="1"/>
</dbReference>
<dbReference type="FunFam" id="3.40.309.10:FF:000006">
    <property type="entry name" value="Gamma-glutamyl phosphate reductase"/>
    <property type="match status" value="1"/>
</dbReference>
<dbReference type="Gene3D" id="3.40.605.10">
    <property type="entry name" value="Aldehyde Dehydrogenase, Chain A, domain 1"/>
    <property type="match status" value="1"/>
</dbReference>
<dbReference type="Gene3D" id="3.40.309.10">
    <property type="entry name" value="Aldehyde Dehydrogenase, Chain A, domain 2"/>
    <property type="match status" value="1"/>
</dbReference>
<dbReference type="HAMAP" id="MF_00412">
    <property type="entry name" value="ProA"/>
    <property type="match status" value="1"/>
</dbReference>
<dbReference type="InterPro" id="IPR016161">
    <property type="entry name" value="Ald_DH/histidinol_DH"/>
</dbReference>
<dbReference type="InterPro" id="IPR016163">
    <property type="entry name" value="Ald_DH_C"/>
</dbReference>
<dbReference type="InterPro" id="IPR016162">
    <property type="entry name" value="Ald_DH_N"/>
</dbReference>
<dbReference type="InterPro" id="IPR015590">
    <property type="entry name" value="Aldehyde_DH_dom"/>
</dbReference>
<dbReference type="InterPro" id="IPR020593">
    <property type="entry name" value="G-glutamylP_reductase_CS"/>
</dbReference>
<dbReference type="InterPro" id="IPR012134">
    <property type="entry name" value="Glu-5-SA_DH"/>
</dbReference>
<dbReference type="InterPro" id="IPR000965">
    <property type="entry name" value="GPR_dom"/>
</dbReference>
<dbReference type="NCBIfam" id="NF001221">
    <property type="entry name" value="PRK00197.1"/>
    <property type="match status" value="1"/>
</dbReference>
<dbReference type="NCBIfam" id="TIGR00407">
    <property type="entry name" value="proA"/>
    <property type="match status" value="1"/>
</dbReference>
<dbReference type="PANTHER" id="PTHR11063:SF8">
    <property type="entry name" value="DELTA-1-PYRROLINE-5-CARBOXYLATE SYNTHASE"/>
    <property type="match status" value="1"/>
</dbReference>
<dbReference type="PANTHER" id="PTHR11063">
    <property type="entry name" value="GLUTAMATE SEMIALDEHYDE DEHYDROGENASE"/>
    <property type="match status" value="1"/>
</dbReference>
<dbReference type="Pfam" id="PF00171">
    <property type="entry name" value="Aldedh"/>
    <property type="match status" value="2"/>
</dbReference>
<dbReference type="PIRSF" id="PIRSF000151">
    <property type="entry name" value="GPR"/>
    <property type="match status" value="1"/>
</dbReference>
<dbReference type="SUPFAM" id="SSF53720">
    <property type="entry name" value="ALDH-like"/>
    <property type="match status" value="1"/>
</dbReference>
<dbReference type="PROSITE" id="PS01223">
    <property type="entry name" value="PROA"/>
    <property type="match status" value="1"/>
</dbReference>
<reference key="1">
    <citation type="journal article" date="2007" name="PLoS Genet.">
        <title>A tale of two oxidation states: bacterial colonization of arsenic-rich environments.</title>
        <authorList>
            <person name="Muller D."/>
            <person name="Medigue C."/>
            <person name="Koechler S."/>
            <person name="Barbe V."/>
            <person name="Barakat M."/>
            <person name="Talla E."/>
            <person name="Bonnefoy V."/>
            <person name="Krin E."/>
            <person name="Arsene-Ploetze F."/>
            <person name="Carapito C."/>
            <person name="Chandler M."/>
            <person name="Cournoyer B."/>
            <person name="Cruveiller S."/>
            <person name="Dossat C."/>
            <person name="Duval S."/>
            <person name="Heymann M."/>
            <person name="Leize E."/>
            <person name="Lieutaud A."/>
            <person name="Lievremont D."/>
            <person name="Makita Y."/>
            <person name="Mangenot S."/>
            <person name="Nitschke W."/>
            <person name="Ortet P."/>
            <person name="Perdrial N."/>
            <person name="Schoepp B."/>
            <person name="Siguier P."/>
            <person name="Simeonova D.D."/>
            <person name="Rouy Z."/>
            <person name="Segurens B."/>
            <person name="Turlin E."/>
            <person name="Vallenet D."/>
            <person name="van Dorsselaer A."/>
            <person name="Weiss S."/>
            <person name="Weissenbach J."/>
            <person name="Lett M.-C."/>
            <person name="Danchin A."/>
            <person name="Bertin P.N."/>
        </authorList>
    </citation>
    <scope>NUCLEOTIDE SEQUENCE [LARGE SCALE GENOMIC DNA]</scope>
    <source>
        <strain>ULPAs1</strain>
    </source>
</reference>
<sequence length="421" mass="45281">MDIKQYMKEVGQRARKASRAMAKADTAAKNQALSLIAAAIRRDADILRAANQVDLVAARLNGLEPAMLDRLTLSDKAIATMAEGLEQIVALPDPIGEISNMKYRPTGIQVGQMRVPLGVIGIIYEARPNVTVDAAGLCIKSGNATILRGGSEAIHCNQALAKLVSEGLAGAGLPADAVQIVETTDRAAVGELITMPEYVDVIVPRGGKGLIERLMKESKVPMIKHLDGICHVYIDDKADPAKALDIAFNAKCHRYGTCNTMETLLVARAIAPTILPALAKLYATRDVELRGDDEARAILQGYAHLAAASAEDWSTEYLDAILSVKIVADMDEAIDHINTYSSKHTDSIVTEDYTRAMRFLREVDSASVMINASTRFADGFEYGLGAEIGISNDKLHARGPVGLDGLTSLKYVVFGHGEVRE</sequence>
<name>PROA_HERAR</name>
<gene>
    <name evidence="1" type="primary">proA</name>
    <name type="ordered locus">HEAR2664</name>
</gene>
<accession>A4G8E9</accession>
<evidence type="ECO:0000255" key="1">
    <source>
        <dbReference type="HAMAP-Rule" id="MF_00412"/>
    </source>
</evidence>
<organism>
    <name type="scientific">Herminiimonas arsenicoxydans</name>
    <dbReference type="NCBI Taxonomy" id="204773"/>
    <lineage>
        <taxon>Bacteria</taxon>
        <taxon>Pseudomonadati</taxon>
        <taxon>Pseudomonadota</taxon>
        <taxon>Betaproteobacteria</taxon>
        <taxon>Burkholderiales</taxon>
        <taxon>Oxalobacteraceae</taxon>
        <taxon>Herminiimonas</taxon>
    </lineage>
</organism>
<comment type="function">
    <text evidence="1">Catalyzes the NADPH-dependent reduction of L-glutamate 5-phosphate into L-glutamate 5-semialdehyde and phosphate. The product spontaneously undergoes cyclization to form 1-pyrroline-5-carboxylate.</text>
</comment>
<comment type="catalytic activity">
    <reaction evidence="1">
        <text>L-glutamate 5-semialdehyde + phosphate + NADP(+) = L-glutamyl 5-phosphate + NADPH + H(+)</text>
        <dbReference type="Rhea" id="RHEA:19541"/>
        <dbReference type="ChEBI" id="CHEBI:15378"/>
        <dbReference type="ChEBI" id="CHEBI:43474"/>
        <dbReference type="ChEBI" id="CHEBI:57783"/>
        <dbReference type="ChEBI" id="CHEBI:58066"/>
        <dbReference type="ChEBI" id="CHEBI:58274"/>
        <dbReference type="ChEBI" id="CHEBI:58349"/>
        <dbReference type="EC" id="1.2.1.41"/>
    </reaction>
</comment>
<comment type="pathway">
    <text evidence="1">Amino-acid biosynthesis; L-proline biosynthesis; L-glutamate 5-semialdehyde from L-glutamate: step 2/2.</text>
</comment>
<comment type="subcellular location">
    <subcellularLocation>
        <location evidence="1">Cytoplasm</location>
    </subcellularLocation>
</comment>
<comment type="similarity">
    <text evidence="1">Belongs to the gamma-glutamyl phosphate reductase family.</text>
</comment>
<feature type="chain" id="PRO_1000049954" description="Gamma-glutamyl phosphate reductase">
    <location>
        <begin position="1"/>
        <end position="421"/>
    </location>
</feature>
<protein>
    <recommendedName>
        <fullName evidence="1">Gamma-glutamyl phosphate reductase</fullName>
        <shortName evidence="1">GPR</shortName>
        <ecNumber evidence="1">1.2.1.41</ecNumber>
    </recommendedName>
    <alternativeName>
        <fullName evidence="1">Glutamate-5-semialdehyde dehydrogenase</fullName>
    </alternativeName>
    <alternativeName>
        <fullName evidence="1">Glutamyl-gamma-semialdehyde dehydrogenase</fullName>
        <shortName evidence="1">GSA dehydrogenase</shortName>
    </alternativeName>
</protein>